<keyword id="KW-0963">Cytoplasm</keyword>
<keyword id="KW-0967">Endosome</keyword>
<keyword id="KW-0472">Membrane</keyword>
<keyword id="KW-0653">Protein transport</keyword>
<keyword id="KW-1185">Reference proteome</keyword>
<keyword id="KW-0813">Transport</keyword>
<comment type="function">
    <text evidence="1">Involved in the endosomal multivesicular bodies (MVB) pathway. MVBs contain intraluminal vesicles (ILVs) that are generated by invagination and scission from the limiting membrane of the endosome and are delivered to lysosomes enabling degradation of membrane proteins. Thought to be a cofactor of VPS4, which catalyzes the disassembly of membrane-associated ESCRT-III (By similarity).</text>
</comment>
<comment type="subcellular location">
    <subcellularLocation>
        <location evidence="1">Cytoplasm</location>
    </subcellularLocation>
    <subcellularLocation>
        <location evidence="1">Endosome membrane</location>
        <topology evidence="1">Peripheral membrane protein</topology>
    </subcellularLocation>
</comment>
<comment type="similarity">
    <text evidence="3">Belongs to the VTA1 family.</text>
</comment>
<organism>
    <name type="scientific">Dictyostelium discoideum</name>
    <name type="common">Social amoeba</name>
    <dbReference type="NCBI Taxonomy" id="44689"/>
    <lineage>
        <taxon>Eukaryota</taxon>
        <taxon>Amoebozoa</taxon>
        <taxon>Evosea</taxon>
        <taxon>Eumycetozoa</taxon>
        <taxon>Dictyostelia</taxon>
        <taxon>Dictyosteliales</taxon>
        <taxon>Dictyosteliaceae</taxon>
        <taxon>Dictyostelium</taxon>
    </lineage>
</organism>
<proteinExistence type="inferred from homology"/>
<dbReference type="EMBL" id="AAFI02000006">
    <property type="protein sequence ID" value="EAL71874.1"/>
    <property type="molecule type" value="Genomic_DNA"/>
</dbReference>
<dbReference type="RefSeq" id="XP_645801.1">
    <property type="nucleotide sequence ID" value="XM_640709.1"/>
</dbReference>
<dbReference type="SMR" id="Q55B11"/>
<dbReference type="FunCoup" id="Q55B11">
    <property type="interactions" value="79"/>
</dbReference>
<dbReference type="STRING" id="44689.Q55B11"/>
<dbReference type="GlyGen" id="Q55B11">
    <property type="glycosylation" value="1 site"/>
</dbReference>
<dbReference type="PaxDb" id="44689-DDB0234058"/>
<dbReference type="EnsemblProtists" id="EAL71874">
    <property type="protein sequence ID" value="EAL71874"/>
    <property type="gene ID" value="DDB_G0271488"/>
</dbReference>
<dbReference type="GeneID" id="8617993"/>
<dbReference type="KEGG" id="ddi:DDB_G0271488"/>
<dbReference type="dictyBase" id="DDB_G0271488">
    <property type="gene designation" value="vta1"/>
</dbReference>
<dbReference type="VEuPathDB" id="AmoebaDB:DDB_G0271488"/>
<dbReference type="eggNOG" id="KOG0917">
    <property type="taxonomic scope" value="Eukaryota"/>
</dbReference>
<dbReference type="HOGENOM" id="CLU_495612_0_0_1"/>
<dbReference type="InParanoid" id="Q55B11"/>
<dbReference type="OMA" id="KAGGNDQ"/>
<dbReference type="Reactome" id="R-DDI-917729">
    <property type="pathway name" value="Endosomal Sorting Complex Required For Transport (ESCRT)"/>
</dbReference>
<dbReference type="PRO" id="PR:Q55B11"/>
<dbReference type="Proteomes" id="UP000002195">
    <property type="component" value="Chromosome 2"/>
</dbReference>
<dbReference type="GO" id="GO:0010008">
    <property type="term" value="C:endosome membrane"/>
    <property type="evidence" value="ECO:0007669"/>
    <property type="project" value="UniProtKB-SubCell"/>
</dbReference>
<dbReference type="GO" id="GO:0005771">
    <property type="term" value="C:multivesicular body"/>
    <property type="evidence" value="ECO:0000318"/>
    <property type="project" value="GO_Central"/>
</dbReference>
<dbReference type="GO" id="GO:0032511">
    <property type="term" value="P:late endosome to vacuole transport via multivesicular body sorting pathway"/>
    <property type="evidence" value="ECO:0000318"/>
    <property type="project" value="GO_Central"/>
</dbReference>
<dbReference type="GO" id="GO:0015031">
    <property type="term" value="P:protein transport"/>
    <property type="evidence" value="ECO:0007669"/>
    <property type="project" value="UniProtKB-KW"/>
</dbReference>
<dbReference type="Gene3D" id="1.20.5.420">
    <property type="entry name" value="Immunoglobulin FC, subunit C"/>
    <property type="match status" value="1"/>
</dbReference>
<dbReference type="Gene3D" id="1.25.40.270">
    <property type="entry name" value="Vacuolar protein sorting-associated protein vta1"/>
    <property type="match status" value="1"/>
</dbReference>
<dbReference type="InterPro" id="IPR044538">
    <property type="entry name" value="Vta1-like"/>
</dbReference>
<dbReference type="InterPro" id="IPR039431">
    <property type="entry name" value="Vta1/CALS_N"/>
</dbReference>
<dbReference type="InterPro" id="IPR023175">
    <property type="entry name" value="Vta1/CALS_N_sf"/>
</dbReference>
<dbReference type="InterPro" id="IPR041212">
    <property type="entry name" value="Vta1_C"/>
</dbReference>
<dbReference type="PANTHER" id="PTHR46009">
    <property type="entry name" value="VACUOLAR PROTEIN SORTING-ASSOCIATED PROTEIN VTA1 HOMOLOG"/>
    <property type="match status" value="1"/>
</dbReference>
<dbReference type="PANTHER" id="PTHR46009:SF1">
    <property type="entry name" value="VACUOLAR PROTEIN SORTING-ASSOCIATED PROTEIN VTA1 HOMOLOG"/>
    <property type="match status" value="1"/>
</dbReference>
<dbReference type="Pfam" id="PF04652">
    <property type="entry name" value="Vta1"/>
    <property type="match status" value="1"/>
</dbReference>
<dbReference type="Pfam" id="PF18097">
    <property type="entry name" value="Vta1_C"/>
    <property type="match status" value="1"/>
</dbReference>
<sequence>MDLASLPPALKPIIPYLKQSQQLEKHDLLMAYYCRVHAIQMAMDIKQKMGASGSFLSIPIVKILDQGDADKAKLGSRLDEEDEAKYVEAFAMKAFSFADTQDRAGKANKATSTTFYSAFLFFNVLEHMGEVSEEVKLKKKYASWRSVDINTAIKNGVAPSPPPSIDQNEEGGASGETEEDAQLKQLEMELNLAKATLQQDNNNNNNMSSSTIITTNSVSEGMSSSLSFPSFPSIPNNNNNNNNTTPSFPSFPSFPSPTNSDNNSNNNKPAFPSFPSFPSPPTTTNSDSAPSFPKFPSTPSPTNSSSNNSQQPSFPSFPSFTSPTNSNNNNNNSQQPSFPTFPNSTNQKRQVFESDEEEEQEEVEDYSEKQQQKSTSSSFPKFPSNSHNNEYNQPPPPAYEFKQSPPQQHKQSPPQQHHNSHDNEALIKYQQQVAQQNLTIQKQKHQNQMLQDEVEQKQQQIQLQQQQLQQQQQQIQLLQKQIQQQQKQLMSGGGGGGNMSMNLNHTPSDTDKASAEKYSKWVISSLQFDDVPSAVKNAKLSLKYLTGEDS</sequence>
<evidence type="ECO:0000250" key="1"/>
<evidence type="ECO:0000256" key="2">
    <source>
        <dbReference type="SAM" id="MobiDB-lite"/>
    </source>
</evidence>
<evidence type="ECO:0000305" key="3"/>
<name>VTA1_DICDI</name>
<protein>
    <recommendedName>
        <fullName>Vacuolar protein sorting-associated protein VTA1 homolog</fullName>
    </recommendedName>
</protein>
<accession>Q55B11</accession>
<reference key="1">
    <citation type="journal article" date="2002" name="Nature">
        <title>Sequence and analysis of chromosome 2 of Dictyostelium discoideum.</title>
        <authorList>
            <person name="Gloeckner G."/>
            <person name="Eichinger L."/>
            <person name="Szafranski K."/>
            <person name="Pachebat J.A."/>
            <person name="Bankier A.T."/>
            <person name="Dear P.H."/>
            <person name="Lehmann R."/>
            <person name="Baumgart C."/>
            <person name="Parra G."/>
            <person name="Abril J.F."/>
            <person name="Guigo R."/>
            <person name="Kumpf K."/>
            <person name="Tunggal B."/>
            <person name="Cox E.C."/>
            <person name="Quail M.A."/>
            <person name="Platzer M."/>
            <person name="Rosenthal A."/>
            <person name="Noegel A.A."/>
        </authorList>
    </citation>
    <scope>NUCLEOTIDE SEQUENCE [LARGE SCALE GENOMIC DNA]</scope>
    <source>
        <strain>AX4</strain>
    </source>
</reference>
<reference key="2">
    <citation type="journal article" date="2005" name="Nature">
        <title>The genome of the social amoeba Dictyostelium discoideum.</title>
        <authorList>
            <person name="Eichinger L."/>
            <person name="Pachebat J.A."/>
            <person name="Gloeckner G."/>
            <person name="Rajandream M.A."/>
            <person name="Sucgang R."/>
            <person name="Berriman M."/>
            <person name="Song J."/>
            <person name="Olsen R."/>
            <person name="Szafranski K."/>
            <person name="Xu Q."/>
            <person name="Tunggal B."/>
            <person name="Kummerfeld S."/>
            <person name="Madera M."/>
            <person name="Konfortov B.A."/>
            <person name="Rivero F."/>
            <person name="Bankier A.T."/>
            <person name="Lehmann R."/>
            <person name="Hamlin N."/>
            <person name="Davies R."/>
            <person name="Gaudet P."/>
            <person name="Fey P."/>
            <person name="Pilcher K."/>
            <person name="Chen G."/>
            <person name="Saunders D."/>
            <person name="Sodergren E.J."/>
            <person name="Davis P."/>
            <person name="Kerhornou A."/>
            <person name="Nie X."/>
            <person name="Hall N."/>
            <person name="Anjard C."/>
            <person name="Hemphill L."/>
            <person name="Bason N."/>
            <person name="Farbrother P."/>
            <person name="Desany B."/>
            <person name="Just E."/>
            <person name="Morio T."/>
            <person name="Rost R."/>
            <person name="Churcher C.M."/>
            <person name="Cooper J."/>
            <person name="Haydock S."/>
            <person name="van Driessche N."/>
            <person name="Cronin A."/>
            <person name="Goodhead I."/>
            <person name="Muzny D.M."/>
            <person name="Mourier T."/>
            <person name="Pain A."/>
            <person name="Lu M."/>
            <person name="Harper D."/>
            <person name="Lindsay R."/>
            <person name="Hauser H."/>
            <person name="James K.D."/>
            <person name="Quiles M."/>
            <person name="Madan Babu M."/>
            <person name="Saito T."/>
            <person name="Buchrieser C."/>
            <person name="Wardroper A."/>
            <person name="Felder M."/>
            <person name="Thangavelu M."/>
            <person name="Johnson D."/>
            <person name="Knights A."/>
            <person name="Loulseged H."/>
            <person name="Mungall K.L."/>
            <person name="Oliver K."/>
            <person name="Price C."/>
            <person name="Quail M.A."/>
            <person name="Urushihara H."/>
            <person name="Hernandez J."/>
            <person name="Rabbinowitsch E."/>
            <person name="Steffen D."/>
            <person name="Sanders M."/>
            <person name="Ma J."/>
            <person name="Kohara Y."/>
            <person name="Sharp S."/>
            <person name="Simmonds M.N."/>
            <person name="Spiegler S."/>
            <person name="Tivey A."/>
            <person name="Sugano S."/>
            <person name="White B."/>
            <person name="Walker D."/>
            <person name="Woodward J.R."/>
            <person name="Winckler T."/>
            <person name="Tanaka Y."/>
            <person name="Shaulsky G."/>
            <person name="Schleicher M."/>
            <person name="Weinstock G.M."/>
            <person name="Rosenthal A."/>
            <person name="Cox E.C."/>
            <person name="Chisholm R.L."/>
            <person name="Gibbs R.A."/>
            <person name="Loomis W.F."/>
            <person name="Platzer M."/>
            <person name="Kay R.R."/>
            <person name="Williams J.G."/>
            <person name="Dear P.H."/>
            <person name="Noegel A.A."/>
            <person name="Barrell B.G."/>
            <person name="Kuspa A."/>
        </authorList>
    </citation>
    <scope>NUCLEOTIDE SEQUENCE [LARGE SCALE GENOMIC DNA]</scope>
    <source>
        <strain>AX4</strain>
    </source>
</reference>
<gene>
    <name type="primary">vta1</name>
    <name type="ORF">DDB_G0271488</name>
</gene>
<feature type="chain" id="PRO_0000367443" description="Vacuolar protein sorting-associated protein VTA1 homolog">
    <location>
        <begin position="1"/>
        <end position="550"/>
    </location>
</feature>
<feature type="region of interest" description="Disordered" evidence="2">
    <location>
        <begin position="153"/>
        <end position="179"/>
    </location>
</feature>
<feature type="region of interest" description="Disordered" evidence="2">
    <location>
        <begin position="220"/>
        <end position="460"/>
    </location>
</feature>
<feature type="region of interest" description="Disordered" evidence="2">
    <location>
        <begin position="488"/>
        <end position="512"/>
    </location>
</feature>
<feature type="compositionally biased region" description="Low complexity" evidence="2">
    <location>
        <begin position="220"/>
        <end position="274"/>
    </location>
</feature>
<feature type="compositionally biased region" description="Low complexity" evidence="2">
    <location>
        <begin position="282"/>
        <end position="338"/>
    </location>
</feature>
<feature type="compositionally biased region" description="Polar residues" evidence="2">
    <location>
        <begin position="340"/>
        <end position="349"/>
    </location>
</feature>
<feature type="compositionally biased region" description="Acidic residues" evidence="2">
    <location>
        <begin position="353"/>
        <end position="365"/>
    </location>
</feature>
<feature type="compositionally biased region" description="Low complexity" evidence="2">
    <location>
        <begin position="372"/>
        <end position="389"/>
    </location>
</feature>
<feature type="compositionally biased region" description="Low complexity" evidence="2">
    <location>
        <begin position="402"/>
        <end position="417"/>
    </location>
</feature>
<feature type="compositionally biased region" description="Polar residues" evidence="2">
    <location>
        <begin position="429"/>
        <end position="450"/>
    </location>
</feature>